<protein>
    <recommendedName>
        <fullName>Serine protease inhibitor Kazal-type 7</fullName>
    </recommendedName>
    <alternativeName>
        <fullName>Esophagus cancer-related gene 2 protein</fullName>
        <shortName>ECRG-2</shortName>
    </alternativeName>
</protein>
<proteinExistence type="evidence at protein level"/>
<accession>P58062</accession>
<accession>Q32LY0</accession>
<sequence length="85" mass="9232">MKITGGLLLLCTVVYFCSSSEAASLSPKKVDCSIYKKYPVVAIPCPITYLPVCGSDYITYGNECHLCTESLKSNGRVQFLHDGSC</sequence>
<comment type="function">
    <text>Probable serine protease inhibitor.</text>
</comment>
<comment type="interaction">
    <interactant intactId="EBI-1182445">
        <id>P58062</id>
    </interactant>
    <interactant intactId="EBI-1182496">
        <id>P16452</id>
        <label>EPB42</label>
    </interactant>
    <organismsDiffer>false</organismsDiffer>
    <experiments>3</experiments>
</comment>
<comment type="interaction">
    <interactant intactId="EBI-1182445">
        <id>P58062</id>
    </interactant>
    <interactant intactId="EBI-712205">
        <id>O15235</id>
        <label>MRPS12</label>
    </interactant>
    <organismsDiffer>false</organismsDiffer>
    <experiments>3</experiments>
</comment>
<comment type="interaction">
    <interactant intactId="EBI-1182445">
        <id>P58062</id>
    </interactant>
    <interactant intactId="EBI-1182473">
        <id>P13640</id>
        <label>MT1G</label>
    </interactant>
    <organismsDiffer>false</organismsDiffer>
    <experiments>3</experiments>
</comment>
<comment type="interaction">
    <interactant intactId="EBI-1182445">
        <id>P58062</id>
    </interactant>
    <interactant intactId="EBI-296567">
        <id>P80294</id>
        <label>MT1H</label>
    </interactant>
    <organismsDiffer>false</organismsDiffer>
    <experiments>3</experiments>
</comment>
<comment type="interaction">
    <interactant intactId="EBI-1182445">
        <id>P58062</id>
    </interactant>
    <interactant intactId="EBI-996616">
        <id>P02795</id>
        <label>MT2A</label>
    </interactant>
    <organismsDiffer>false</organismsDiffer>
    <experiments>7</experiments>
</comment>
<comment type="interaction">
    <interactant intactId="EBI-1182445">
        <id>P58062</id>
    </interactant>
    <interactant intactId="EBI-742029">
        <id>Q3YEC7</id>
        <label>RABL6</label>
    </interactant>
    <organismsDiffer>false</organismsDiffer>
    <experiments>3</experiments>
</comment>
<comment type="interaction">
    <interactant intactId="EBI-1182445">
        <id>P58062</id>
    </interactant>
    <interactant intactId="EBI-1182458">
        <id>Q8IZW4</id>
    </interactant>
    <organismsDiffer>false</organismsDiffer>
    <experiments>3</experiments>
</comment>
<comment type="subcellular location">
    <subcellularLocation>
        <location evidence="4">Secreted</location>
    </subcellularLocation>
</comment>
<comment type="online information" name="Atlas of Genetics and Cytogenetics in Oncology and Haematology">
    <link uri="https://atlasgeneticsoncology.org/gene/40396/SPINK7"/>
</comment>
<dbReference type="EMBL" id="AF268198">
    <property type="protein sequence ID" value="AAK27795.1"/>
    <property type="molecule type" value="mRNA"/>
</dbReference>
<dbReference type="EMBL" id="AY359072">
    <property type="protein sequence ID" value="AAQ89431.1"/>
    <property type="molecule type" value="mRNA"/>
</dbReference>
<dbReference type="EMBL" id="BC109385">
    <property type="protein sequence ID" value="AAI09386.1"/>
    <property type="molecule type" value="mRNA"/>
</dbReference>
<dbReference type="EMBL" id="BC110067">
    <property type="protein sequence ID" value="AAI10068.1"/>
    <property type="molecule type" value="mRNA"/>
</dbReference>
<dbReference type="CCDS" id="CCDS4289.1"/>
<dbReference type="RefSeq" id="NP_115955.1">
    <property type="nucleotide sequence ID" value="NM_032566.3"/>
</dbReference>
<dbReference type="PDB" id="2LEO">
    <property type="method" value="NMR"/>
    <property type="chains" value="A=20-85"/>
</dbReference>
<dbReference type="PDBsum" id="2LEO"/>
<dbReference type="BMRB" id="P58062"/>
<dbReference type="SMR" id="P58062"/>
<dbReference type="BioGRID" id="124174">
    <property type="interactions" value="18"/>
</dbReference>
<dbReference type="FunCoup" id="P58062">
    <property type="interactions" value="29"/>
</dbReference>
<dbReference type="IntAct" id="P58062">
    <property type="interactions" value="17"/>
</dbReference>
<dbReference type="STRING" id="9606.ENSP00000274565"/>
<dbReference type="MEROPS" id="I01.057"/>
<dbReference type="BioMuta" id="SPINK7"/>
<dbReference type="DMDM" id="13959341"/>
<dbReference type="MassIVE" id="P58062"/>
<dbReference type="PaxDb" id="9606-ENSP00000274565"/>
<dbReference type="PeptideAtlas" id="P58062"/>
<dbReference type="ProteomicsDB" id="57048"/>
<dbReference type="Antibodypedia" id="49020">
    <property type="antibodies" value="81 antibodies from 23 providers"/>
</dbReference>
<dbReference type="DNASU" id="84651"/>
<dbReference type="Ensembl" id="ENST00000274565.5">
    <property type="protein sequence ID" value="ENSP00000274565.4"/>
    <property type="gene ID" value="ENSG00000145879.11"/>
</dbReference>
<dbReference type="GeneID" id="84651"/>
<dbReference type="KEGG" id="hsa:84651"/>
<dbReference type="MANE-Select" id="ENST00000274565.5">
    <property type="protein sequence ID" value="ENSP00000274565.4"/>
    <property type="RefSeq nucleotide sequence ID" value="NM_032566.3"/>
    <property type="RefSeq protein sequence ID" value="NP_115955.1"/>
</dbReference>
<dbReference type="UCSC" id="uc003lpd.4">
    <property type="organism name" value="human"/>
</dbReference>
<dbReference type="AGR" id="HGNC:24643"/>
<dbReference type="CTD" id="84651"/>
<dbReference type="DisGeNET" id="84651"/>
<dbReference type="GeneCards" id="SPINK7"/>
<dbReference type="HGNC" id="HGNC:24643">
    <property type="gene designation" value="SPINK7"/>
</dbReference>
<dbReference type="HPA" id="ENSG00000145879">
    <property type="expression patterns" value="Tissue enhanced (cervix, esophagus, vagina)"/>
</dbReference>
<dbReference type="neXtProt" id="NX_P58062"/>
<dbReference type="OpenTargets" id="ENSG00000145879"/>
<dbReference type="PharmGKB" id="PA143485620"/>
<dbReference type="VEuPathDB" id="HostDB:ENSG00000145879"/>
<dbReference type="eggNOG" id="KOG3649">
    <property type="taxonomic scope" value="Eukaryota"/>
</dbReference>
<dbReference type="GeneTree" id="ENSGT00940000161876"/>
<dbReference type="HOGENOM" id="CLU_169765_4_1_1"/>
<dbReference type="InParanoid" id="P58062"/>
<dbReference type="OMA" id="CTVAHFC"/>
<dbReference type="OrthoDB" id="126772at2759"/>
<dbReference type="PAN-GO" id="P58062">
    <property type="GO annotations" value="0 GO annotations based on evolutionary models"/>
</dbReference>
<dbReference type="PhylomeDB" id="P58062"/>
<dbReference type="PathwayCommons" id="P58062"/>
<dbReference type="SignaLink" id="P58062"/>
<dbReference type="BioGRID-ORCS" id="84651">
    <property type="hits" value="10 hits in 1103 CRISPR screens"/>
</dbReference>
<dbReference type="CD-CODE" id="8C2F96ED">
    <property type="entry name" value="Centrosome"/>
</dbReference>
<dbReference type="EvolutionaryTrace" id="P58062"/>
<dbReference type="GenomeRNAi" id="84651"/>
<dbReference type="Pharos" id="P58062">
    <property type="development level" value="Tbio"/>
</dbReference>
<dbReference type="PRO" id="PR:P58062"/>
<dbReference type="Proteomes" id="UP000005640">
    <property type="component" value="Chromosome 5"/>
</dbReference>
<dbReference type="RNAct" id="P58062">
    <property type="molecule type" value="protein"/>
</dbReference>
<dbReference type="Bgee" id="ENSG00000145879">
    <property type="expression patterns" value="Expressed in lower esophagus mucosa and 110 other cell types or tissues"/>
</dbReference>
<dbReference type="ExpressionAtlas" id="P58062">
    <property type="expression patterns" value="baseline and differential"/>
</dbReference>
<dbReference type="GO" id="GO:0005615">
    <property type="term" value="C:extracellular space"/>
    <property type="evidence" value="ECO:0007669"/>
    <property type="project" value="Ensembl"/>
</dbReference>
<dbReference type="GO" id="GO:0004867">
    <property type="term" value="F:serine-type endopeptidase inhibitor activity"/>
    <property type="evidence" value="ECO:0007669"/>
    <property type="project" value="UniProtKB-KW"/>
</dbReference>
<dbReference type="GO" id="GO:0006954">
    <property type="term" value="P:inflammatory response"/>
    <property type="evidence" value="ECO:0007669"/>
    <property type="project" value="Ensembl"/>
</dbReference>
<dbReference type="GO" id="GO:1900016">
    <property type="term" value="P:negative regulation of cytokine production involved in inflammatory response"/>
    <property type="evidence" value="ECO:0007669"/>
    <property type="project" value="Ensembl"/>
</dbReference>
<dbReference type="CDD" id="cd01327">
    <property type="entry name" value="KAZAL_PSTI"/>
    <property type="match status" value="1"/>
</dbReference>
<dbReference type="Gene3D" id="3.30.60.30">
    <property type="match status" value="1"/>
</dbReference>
<dbReference type="InterPro" id="IPR050159">
    <property type="entry name" value="Kazal-type_SerProtInhib"/>
</dbReference>
<dbReference type="InterPro" id="IPR002350">
    <property type="entry name" value="Kazal_dom"/>
</dbReference>
<dbReference type="InterPro" id="IPR036058">
    <property type="entry name" value="Kazal_dom_sf"/>
</dbReference>
<dbReference type="PANTHER" id="PTHR47499:SF1">
    <property type="entry name" value="SERINE PROTEASE INHIBITOR KAZAL-TYPE 7"/>
    <property type="match status" value="1"/>
</dbReference>
<dbReference type="PANTHER" id="PTHR47499">
    <property type="entry name" value="SERINE PROTEASE INHIBITOR KAZAL-TYPE 7 SPINK7"/>
    <property type="match status" value="1"/>
</dbReference>
<dbReference type="Pfam" id="PF00050">
    <property type="entry name" value="Kazal_1"/>
    <property type="match status" value="1"/>
</dbReference>
<dbReference type="SMART" id="SM00280">
    <property type="entry name" value="KAZAL"/>
    <property type="match status" value="1"/>
</dbReference>
<dbReference type="SUPFAM" id="SSF100895">
    <property type="entry name" value="Kazal-type serine protease inhibitors"/>
    <property type="match status" value="1"/>
</dbReference>
<dbReference type="PROSITE" id="PS00282">
    <property type="entry name" value="KAZAL_1"/>
    <property type="match status" value="1"/>
</dbReference>
<dbReference type="PROSITE" id="PS51465">
    <property type="entry name" value="KAZAL_2"/>
    <property type="match status" value="1"/>
</dbReference>
<keyword id="KW-0002">3D-structure</keyword>
<keyword id="KW-1015">Disulfide bond</keyword>
<keyword id="KW-0646">Protease inhibitor</keyword>
<keyword id="KW-1267">Proteomics identification</keyword>
<keyword id="KW-1185">Reference proteome</keyword>
<keyword id="KW-0964">Secreted</keyword>
<keyword id="KW-0722">Serine protease inhibitor</keyword>
<keyword id="KW-0732">Signal</keyword>
<gene>
    <name type="primary">SPINK7</name>
    <name type="synonym">ECG2</name>
    <name type="ORF">UNQ745/PRO1474</name>
</gene>
<name>ISK7_HUMAN</name>
<feature type="signal peptide" evidence="1">
    <location>
        <begin position="1"/>
        <end position="19"/>
    </location>
</feature>
<feature type="chain" id="PRO_0000016565" description="Serine protease inhibitor Kazal-type 7">
    <location>
        <begin position="20"/>
        <end position="85"/>
    </location>
</feature>
<feature type="domain" description="Kazal-like" evidence="2">
    <location>
        <begin position="26"/>
        <end position="85"/>
    </location>
</feature>
<feature type="site" description="Reactive bond" evidence="2">
    <location>
        <begin position="47"/>
        <end position="48"/>
    </location>
</feature>
<feature type="disulfide bond" evidence="2 3">
    <location>
        <begin position="32"/>
        <end position="67"/>
    </location>
</feature>
<feature type="disulfide bond" evidence="2 3">
    <location>
        <begin position="45"/>
        <end position="64"/>
    </location>
</feature>
<feature type="disulfide bond" evidence="2 3">
    <location>
        <begin position="53"/>
        <end position="85"/>
    </location>
</feature>
<feature type="helix" evidence="5">
    <location>
        <begin position="33"/>
        <end position="36"/>
    </location>
</feature>
<feature type="strand" evidence="5">
    <location>
        <begin position="52"/>
        <end position="54"/>
    </location>
</feature>
<feature type="strand" evidence="5">
    <location>
        <begin position="59"/>
        <end position="62"/>
    </location>
</feature>
<feature type="helix" evidence="5">
    <location>
        <begin position="63"/>
        <end position="72"/>
    </location>
</feature>
<feature type="strand" evidence="5">
    <location>
        <begin position="75"/>
        <end position="77"/>
    </location>
</feature>
<feature type="strand" evidence="5">
    <location>
        <begin position="79"/>
        <end position="83"/>
    </location>
</feature>
<reference key="1">
    <citation type="submission" date="2000-05" db="EMBL/GenBank/DDBJ databases">
        <title>Cloning and function research of the esophagus cancer related gene-2 (ECRG-2).</title>
        <authorList>
            <person name="Bi M."/>
            <person name="Lu S."/>
        </authorList>
    </citation>
    <scope>NUCLEOTIDE SEQUENCE [MRNA]</scope>
    <source>
        <tissue>Esophagus</tissue>
    </source>
</reference>
<reference key="2">
    <citation type="journal article" date="2003" name="Genome Res.">
        <title>The secreted protein discovery initiative (SPDI), a large-scale effort to identify novel human secreted and transmembrane proteins: a bioinformatics assessment.</title>
        <authorList>
            <person name="Clark H.F."/>
            <person name="Gurney A.L."/>
            <person name="Abaya E."/>
            <person name="Baker K."/>
            <person name="Baldwin D.T."/>
            <person name="Brush J."/>
            <person name="Chen J."/>
            <person name="Chow B."/>
            <person name="Chui C."/>
            <person name="Crowley C."/>
            <person name="Currell B."/>
            <person name="Deuel B."/>
            <person name="Dowd P."/>
            <person name="Eaton D."/>
            <person name="Foster J.S."/>
            <person name="Grimaldi C."/>
            <person name="Gu Q."/>
            <person name="Hass P.E."/>
            <person name="Heldens S."/>
            <person name="Huang A."/>
            <person name="Kim H.S."/>
            <person name="Klimowski L."/>
            <person name="Jin Y."/>
            <person name="Johnson S."/>
            <person name="Lee J."/>
            <person name="Lewis L."/>
            <person name="Liao D."/>
            <person name="Mark M.R."/>
            <person name="Robbie E."/>
            <person name="Sanchez C."/>
            <person name="Schoenfeld J."/>
            <person name="Seshagiri S."/>
            <person name="Simmons L."/>
            <person name="Singh J."/>
            <person name="Smith V."/>
            <person name="Stinson J."/>
            <person name="Vagts A."/>
            <person name="Vandlen R.L."/>
            <person name="Watanabe C."/>
            <person name="Wieand D."/>
            <person name="Woods K."/>
            <person name="Xie M.-H."/>
            <person name="Yansura D.G."/>
            <person name="Yi S."/>
            <person name="Yu G."/>
            <person name="Yuan J."/>
            <person name="Zhang M."/>
            <person name="Zhang Z."/>
            <person name="Goddard A.D."/>
            <person name="Wood W.I."/>
            <person name="Godowski P.J."/>
            <person name="Gray A.M."/>
        </authorList>
    </citation>
    <scope>NUCLEOTIDE SEQUENCE [LARGE SCALE MRNA]</scope>
</reference>
<reference key="3">
    <citation type="journal article" date="2004" name="Genome Res.">
        <title>The status, quality, and expansion of the NIH full-length cDNA project: the Mammalian Gene Collection (MGC).</title>
        <authorList>
            <consortium name="The MGC Project Team"/>
        </authorList>
    </citation>
    <scope>NUCLEOTIDE SEQUENCE [LARGE SCALE MRNA]</scope>
</reference>
<reference key="4">
    <citation type="journal article" date="2012" name="J. Biomol. NMR">
        <title>NMR structure note: human esophageal cancer-related gene 2.</title>
        <authorList>
            <person name="Feng Y."/>
            <person name="Geng Y."/>
            <person name="Zhou T."/>
            <person name="Wang J."/>
        </authorList>
    </citation>
    <scope>STRUCTURE BY NMR OF 20-85</scope>
    <scope>DISULFIDE BONDS</scope>
</reference>
<evidence type="ECO:0000255" key="1"/>
<evidence type="ECO:0000255" key="2">
    <source>
        <dbReference type="PROSITE-ProRule" id="PRU00798"/>
    </source>
</evidence>
<evidence type="ECO:0000269" key="3">
    <source>
    </source>
</evidence>
<evidence type="ECO:0000305" key="4"/>
<evidence type="ECO:0007829" key="5">
    <source>
        <dbReference type="PDB" id="2LEO"/>
    </source>
</evidence>
<organism>
    <name type="scientific">Homo sapiens</name>
    <name type="common">Human</name>
    <dbReference type="NCBI Taxonomy" id="9606"/>
    <lineage>
        <taxon>Eukaryota</taxon>
        <taxon>Metazoa</taxon>
        <taxon>Chordata</taxon>
        <taxon>Craniata</taxon>
        <taxon>Vertebrata</taxon>
        <taxon>Euteleostomi</taxon>
        <taxon>Mammalia</taxon>
        <taxon>Eutheria</taxon>
        <taxon>Euarchontoglires</taxon>
        <taxon>Primates</taxon>
        <taxon>Haplorrhini</taxon>
        <taxon>Catarrhini</taxon>
        <taxon>Hominidae</taxon>
        <taxon>Homo</taxon>
    </lineage>
</organism>